<protein>
    <recommendedName>
        <fullName evidence="1">Hydroxyethylthiazole kinase</fullName>
        <ecNumber evidence="1">2.7.1.50</ecNumber>
    </recommendedName>
    <alternativeName>
        <fullName evidence="1">4-methyl-5-beta-hydroxyethylthiazole kinase</fullName>
        <shortName evidence="1">TH kinase</shortName>
        <shortName evidence="1">Thz kinase</shortName>
    </alternativeName>
</protein>
<proteinExistence type="inferred from homology"/>
<gene>
    <name evidence="1" type="primary">thiM</name>
    <name type="ordered locus">Dole_0749</name>
</gene>
<reference key="1">
    <citation type="submission" date="2007-10" db="EMBL/GenBank/DDBJ databases">
        <title>Complete sequence of Desulfococcus oleovorans Hxd3.</title>
        <authorList>
            <consortium name="US DOE Joint Genome Institute"/>
            <person name="Copeland A."/>
            <person name="Lucas S."/>
            <person name="Lapidus A."/>
            <person name="Barry K."/>
            <person name="Glavina del Rio T."/>
            <person name="Dalin E."/>
            <person name="Tice H."/>
            <person name="Pitluck S."/>
            <person name="Kiss H."/>
            <person name="Brettin T."/>
            <person name="Bruce D."/>
            <person name="Detter J.C."/>
            <person name="Han C."/>
            <person name="Schmutz J."/>
            <person name="Larimer F."/>
            <person name="Land M."/>
            <person name="Hauser L."/>
            <person name="Kyrpides N."/>
            <person name="Kim E."/>
            <person name="Wawrik B."/>
            <person name="Richardson P."/>
        </authorList>
    </citation>
    <scope>NUCLEOTIDE SEQUENCE [LARGE SCALE GENOMIC DNA]</scope>
    <source>
        <strain>DSM 6200 / JCM 39069 / Hxd3</strain>
    </source>
</reference>
<accession>A8ZV98</accession>
<organism>
    <name type="scientific">Desulfosudis oleivorans (strain DSM 6200 / JCM 39069 / Hxd3)</name>
    <name type="common">Desulfococcus oleovorans</name>
    <dbReference type="NCBI Taxonomy" id="96561"/>
    <lineage>
        <taxon>Bacteria</taxon>
        <taxon>Pseudomonadati</taxon>
        <taxon>Thermodesulfobacteriota</taxon>
        <taxon>Desulfobacteria</taxon>
        <taxon>Desulfobacterales</taxon>
        <taxon>Desulfosudaceae</taxon>
        <taxon>Desulfosudis</taxon>
    </lineage>
</organism>
<dbReference type="EC" id="2.7.1.50" evidence="1"/>
<dbReference type="EMBL" id="CP000859">
    <property type="protein sequence ID" value="ABW66559.1"/>
    <property type="molecule type" value="Genomic_DNA"/>
</dbReference>
<dbReference type="RefSeq" id="WP_012174177.1">
    <property type="nucleotide sequence ID" value="NC_009943.1"/>
</dbReference>
<dbReference type="SMR" id="A8ZV98"/>
<dbReference type="STRING" id="96561.Dole_0749"/>
<dbReference type="KEGG" id="dol:Dole_0749"/>
<dbReference type="eggNOG" id="COG2145">
    <property type="taxonomic scope" value="Bacteria"/>
</dbReference>
<dbReference type="HOGENOM" id="CLU_019943_0_1_7"/>
<dbReference type="OrthoDB" id="8909021at2"/>
<dbReference type="UniPathway" id="UPA00060">
    <property type="reaction ID" value="UER00139"/>
</dbReference>
<dbReference type="Proteomes" id="UP000008561">
    <property type="component" value="Chromosome"/>
</dbReference>
<dbReference type="GO" id="GO:0005524">
    <property type="term" value="F:ATP binding"/>
    <property type="evidence" value="ECO:0007669"/>
    <property type="project" value="UniProtKB-UniRule"/>
</dbReference>
<dbReference type="GO" id="GO:0004417">
    <property type="term" value="F:hydroxyethylthiazole kinase activity"/>
    <property type="evidence" value="ECO:0007669"/>
    <property type="project" value="UniProtKB-UniRule"/>
</dbReference>
<dbReference type="GO" id="GO:0000287">
    <property type="term" value="F:magnesium ion binding"/>
    <property type="evidence" value="ECO:0007669"/>
    <property type="project" value="UniProtKB-UniRule"/>
</dbReference>
<dbReference type="GO" id="GO:0009228">
    <property type="term" value="P:thiamine biosynthetic process"/>
    <property type="evidence" value="ECO:0007669"/>
    <property type="project" value="UniProtKB-KW"/>
</dbReference>
<dbReference type="GO" id="GO:0009229">
    <property type="term" value="P:thiamine diphosphate biosynthetic process"/>
    <property type="evidence" value="ECO:0007669"/>
    <property type="project" value="UniProtKB-UniRule"/>
</dbReference>
<dbReference type="CDD" id="cd01170">
    <property type="entry name" value="THZ_kinase"/>
    <property type="match status" value="1"/>
</dbReference>
<dbReference type="Gene3D" id="3.40.1190.20">
    <property type="match status" value="1"/>
</dbReference>
<dbReference type="HAMAP" id="MF_00228">
    <property type="entry name" value="Thz_kinase"/>
    <property type="match status" value="1"/>
</dbReference>
<dbReference type="InterPro" id="IPR000417">
    <property type="entry name" value="Hyethyz_kinase"/>
</dbReference>
<dbReference type="InterPro" id="IPR029056">
    <property type="entry name" value="Ribokinase-like"/>
</dbReference>
<dbReference type="NCBIfam" id="NF006830">
    <property type="entry name" value="PRK09355.1"/>
    <property type="match status" value="1"/>
</dbReference>
<dbReference type="NCBIfam" id="TIGR00694">
    <property type="entry name" value="thiM"/>
    <property type="match status" value="1"/>
</dbReference>
<dbReference type="Pfam" id="PF02110">
    <property type="entry name" value="HK"/>
    <property type="match status" value="1"/>
</dbReference>
<dbReference type="PIRSF" id="PIRSF000513">
    <property type="entry name" value="Thz_kinase"/>
    <property type="match status" value="1"/>
</dbReference>
<dbReference type="PRINTS" id="PR01099">
    <property type="entry name" value="HYETHTZKNASE"/>
</dbReference>
<dbReference type="SUPFAM" id="SSF53613">
    <property type="entry name" value="Ribokinase-like"/>
    <property type="match status" value="1"/>
</dbReference>
<sequence length="274" mass="29060">MNEHEFAQKTIAIRRKVREQRPLVHHITNFVVMNITANVTLAVGASPVMAHAHEEVKEMAAFAGALNLNIGTLTPYWIDAMVMAGKVAEQRGIPIVLDPVGSGATPLRTGAAKKILAEVGVNVIRGNASEVMSLFADKETVNIRGVDSLETVDAVRHEAGLLAGELEKVVAVTGPVDIVTDGTRTLEVHNGTPMFGRVTGTGCSATTVISCFCAVEPDLLVASAAALGYYGLAGEEAARISNGPGSFQAALLDTLYNLPEKIIQEKLRIREVLP</sequence>
<feature type="chain" id="PRO_0000383851" description="Hydroxyethylthiazole kinase">
    <location>
        <begin position="1"/>
        <end position="274"/>
    </location>
</feature>
<feature type="binding site" evidence="1">
    <location>
        <position position="49"/>
    </location>
    <ligand>
        <name>substrate</name>
    </ligand>
</feature>
<feature type="binding site" evidence="1">
    <location>
        <position position="125"/>
    </location>
    <ligand>
        <name>ATP</name>
        <dbReference type="ChEBI" id="CHEBI:30616"/>
    </ligand>
</feature>
<feature type="binding site" evidence="1">
    <location>
        <position position="173"/>
    </location>
    <ligand>
        <name>ATP</name>
        <dbReference type="ChEBI" id="CHEBI:30616"/>
    </ligand>
</feature>
<feature type="binding site" evidence="1">
    <location>
        <position position="200"/>
    </location>
    <ligand>
        <name>substrate</name>
    </ligand>
</feature>
<evidence type="ECO:0000255" key="1">
    <source>
        <dbReference type="HAMAP-Rule" id="MF_00228"/>
    </source>
</evidence>
<comment type="function">
    <text evidence="1">Catalyzes the phosphorylation of the hydroxyl group of 4-methyl-5-beta-hydroxyethylthiazole (THZ).</text>
</comment>
<comment type="catalytic activity">
    <reaction evidence="1">
        <text>5-(2-hydroxyethyl)-4-methylthiazole + ATP = 4-methyl-5-(2-phosphooxyethyl)-thiazole + ADP + H(+)</text>
        <dbReference type="Rhea" id="RHEA:24212"/>
        <dbReference type="ChEBI" id="CHEBI:15378"/>
        <dbReference type="ChEBI" id="CHEBI:17957"/>
        <dbReference type="ChEBI" id="CHEBI:30616"/>
        <dbReference type="ChEBI" id="CHEBI:58296"/>
        <dbReference type="ChEBI" id="CHEBI:456216"/>
        <dbReference type="EC" id="2.7.1.50"/>
    </reaction>
</comment>
<comment type="cofactor">
    <cofactor evidence="1">
        <name>Mg(2+)</name>
        <dbReference type="ChEBI" id="CHEBI:18420"/>
    </cofactor>
</comment>
<comment type="pathway">
    <text evidence="1">Cofactor biosynthesis; thiamine diphosphate biosynthesis; 4-methyl-5-(2-phosphoethyl)-thiazole from 5-(2-hydroxyethyl)-4-methylthiazole: step 1/1.</text>
</comment>
<comment type="similarity">
    <text evidence="1">Belongs to the Thz kinase family.</text>
</comment>
<keyword id="KW-0067">ATP-binding</keyword>
<keyword id="KW-0418">Kinase</keyword>
<keyword id="KW-0460">Magnesium</keyword>
<keyword id="KW-0479">Metal-binding</keyword>
<keyword id="KW-0547">Nucleotide-binding</keyword>
<keyword id="KW-1185">Reference proteome</keyword>
<keyword id="KW-0784">Thiamine biosynthesis</keyword>
<keyword id="KW-0808">Transferase</keyword>
<name>THIM_DESOH</name>